<protein>
    <recommendedName>
        <fullName evidence="1">tRNA 5-methylaminomethyl-2-thiouridine biosynthesis bifunctional protein MnmC</fullName>
        <shortName evidence="1">tRNA mnm(5)s(2)U biosynthesis bifunctional protein</shortName>
    </recommendedName>
    <domain>
        <recommendedName>
            <fullName evidence="1">tRNA (mnm(5)s(2)U34)-methyltransferase</fullName>
            <ecNumber evidence="1">2.1.1.61</ecNumber>
        </recommendedName>
    </domain>
    <domain>
        <recommendedName>
            <fullName evidence="1">FAD-dependent cmnm(5)s(2)U34 oxidoreductase</fullName>
            <ecNumber evidence="1">1.5.-.-</ecNumber>
        </recommendedName>
    </domain>
</protein>
<evidence type="ECO:0000255" key="1">
    <source>
        <dbReference type="HAMAP-Rule" id="MF_01102"/>
    </source>
</evidence>
<dbReference type="EC" id="2.1.1.61" evidence="1"/>
<dbReference type="EC" id="1.5.-.-" evidence="1"/>
<dbReference type="EMBL" id="CP000744">
    <property type="protein sequence ID" value="ABR84428.1"/>
    <property type="molecule type" value="Genomic_DNA"/>
</dbReference>
<dbReference type="RefSeq" id="WP_012074817.1">
    <property type="nucleotide sequence ID" value="NC_009656.1"/>
</dbReference>
<dbReference type="SMR" id="A6V1X0"/>
<dbReference type="KEGG" id="pap:PSPA7_1671"/>
<dbReference type="HOGENOM" id="CLU_022427_1_0_6"/>
<dbReference type="Proteomes" id="UP000001582">
    <property type="component" value="Chromosome"/>
</dbReference>
<dbReference type="GO" id="GO:0005737">
    <property type="term" value="C:cytoplasm"/>
    <property type="evidence" value="ECO:0007669"/>
    <property type="project" value="UniProtKB-SubCell"/>
</dbReference>
<dbReference type="GO" id="GO:0050660">
    <property type="term" value="F:flavin adenine dinucleotide binding"/>
    <property type="evidence" value="ECO:0007669"/>
    <property type="project" value="UniProtKB-UniRule"/>
</dbReference>
<dbReference type="GO" id="GO:0016645">
    <property type="term" value="F:oxidoreductase activity, acting on the CH-NH group of donors"/>
    <property type="evidence" value="ECO:0007669"/>
    <property type="project" value="InterPro"/>
</dbReference>
<dbReference type="GO" id="GO:0004808">
    <property type="term" value="F:tRNA (5-methylaminomethyl-2-thiouridylate)(34)-methyltransferase activity"/>
    <property type="evidence" value="ECO:0007669"/>
    <property type="project" value="UniProtKB-EC"/>
</dbReference>
<dbReference type="GO" id="GO:0032259">
    <property type="term" value="P:methylation"/>
    <property type="evidence" value="ECO:0007669"/>
    <property type="project" value="UniProtKB-KW"/>
</dbReference>
<dbReference type="GO" id="GO:0002098">
    <property type="term" value="P:tRNA wobble uridine modification"/>
    <property type="evidence" value="ECO:0007669"/>
    <property type="project" value="TreeGrafter"/>
</dbReference>
<dbReference type="Gene3D" id="3.30.9.10">
    <property type="entry name" value="D-Amino Acid Oxidase, subunit A, domain 2"/>
    <property type="match status" value="1"/>
</dbReference>
<dbReference type="Gene3D" id="3.50.50.60">
    <property type="entry name" value="FAD/NAD(P)-binding domain"/>
    <property type="match status" value="1"/>
</dbReference>
<dbReference type="Gene3D" id="3.40.50.150">
    <property type="entry name" value="Vaccinia Virus protein VP39"/>
    <property type="match status" value="1"/>
</dbReference>
<dbReference type="HAMAP" id="MF_01102">
    <property type="entry name" value="MnmC"/>
    <property type="match status" value="1"/>
</dbReference>
<dbReference type="InterPro" id="IPR006076">
    <property type="entry name" value="FAD-dep_OxRdtase"/>
</dbReference>
<dbReference type="InterPro" id="IPR036188">
    <property type="entry name" value="FAD/NAD-bd_sf"/>
</dbReference>
<dbReference type="InterPro" id="IPR008471">
    <property type="entry name" value="MnmC-like_methylTransf"/>
</dbReference>
<dbReference type="InterPro" id="IPR029063">
    <property type="entry name" value="SAM-dependent_MTases_sf"/>
</dbReference>
<dbReference type="InterPro" id="IPR023032">
    <property type="entry name" value="tRNA_MAMT_biosynth_bifunc_MnmC"/>
</dbReference>
<dbReference type="InterPro" id="IPR047785">
    <property type="entry name" value="tRNA_MNMC2"/>
</dbReference>
<dbReference type="InterPro" id="IPR017610">
    <property type="entry name" value="tRNA_S-uridine_synth_MnmC_C"/>
</dbReference>
<dbReference type="NCBIfam" id="TIGR03197">
    <property type="entry name" value="MnmC_Cterm"/>
    <property type="match status" value="1"/>
</dbReference>
<dbReference type="NCBIfam" id="NF002481">
    <property type="entry name" value="PRK01747.1-2"/>
    <property type="match status" value="1"/>
</dbReference>
<dbReference type="NCBIfam" id="NF033855">
    <property type="entry name" value="tRNA_MNMC2"/>
    <property type="match status" value="1"/>
</dbReference>
<dbReference type="PANTHER" id="PTHR13847">
    <property type="entry name" value="SARCOSINE DEHYDROGENASE-RELATED"/>
    <property type="match status" value="1"/>
</dbReference>
<dbReference type="PANTHER" id="PTHR13847:SF283">
    <property type="entry name" value="TRNA 5-METHYLAMINOMETHYL-2-THIOURIDINE BIOSYNTHESIS BIFUNCTIONAL PROTEIN MNMC"/>
    <property type="match status" value="1"/>
</dbReference>
<dbReference type="Pfam" id="PF01266">
    <property type="entry name" value="DAO"/>
    <property type="match status" value="1"/>
</dbReference>
<dbReference type="Pfam" id="PF05430">
    <property type="entry name" value="Methyltransf_30"/>
    <property type="match status" value="1"/>
</dbReference>
<dbReference type="SUPFAM" id="SSF54373">
    <property type="entry name" value="FAD-linked reductases, C-terminal domain"/>
    <property type="match status" value="1"/>
</dbReference>
<dbReference type="SUPFAM" id="SSF51905">
    <property type="entry name" value="FAD/NAD(P)-binding domain"/>
    <property type="match status" value="1"/>
</dbReference>
<dbReference type="SUPFAM" id="SSF53335">
    <property type="entry name" value="S-adenosyl-L-methionine-dependent methyltransferases"/>
    <property type="match status" value="1"/>
</dbReference>
<proteinExistence type="inferred from homology"/>
<accession>A6V1X0</accession>
<comment type="function">
    <text evidence="1">Catalyzes the last two steps in the biosynthesis of 5-methylaminomethyl-2-thiouridine (mnm(5)s(2)U) at the wobble position (U34) in tRNA. Catalyzes the FAD-dependent demodification of cmnm(5)s(2)U34 to nm(5)s(2)U34, followed by the transfer of a methyl group from S-adenosyl-L-methionine to nm(5)s(2)U34, to form mnm(5)s(2)U34.</text>
</comment>
<comment type="catalytic activity">
    <reaction evidence="1">
        <text>5-aminomethyl-2-thiouridine(34) in tRNA + S-adenosyl-L-methionine = 5-methylaminomethyl-2-thiouridine(34) in tRNA + S-adenosyl-L-homocysteine + H(+)</text>
        <dbReference type="Rhea" id="RHEA:19569"/>
        <dbReference type="Rhea" id="RHEA-COMP:10195"/>
        <dbReference type="Rhea" id="RHEA-COMP:10197"/>
        <dbReference type="ChEBI" id="CHEBI:15378"/>
        <dbReference type="ChEBI" id="CHEBI:57856"/>
        <dbReference type="ChEBI" id="CHEBI:59789"/>
        <dbReference type="ChEBI" id="CHEBI:74454"/>
        <dbReference type="ChEBI" id="CHEBI:74455"/>
        <dbReference type="EC" id="2.1.1.61"/>
    </reaction>
</comment>
<comment type="cofactor">
    <cofactor evidence="1">
        <name>FAD</name>
        <dbReference type="ChEBI" id="CHEBI:57692"/>
    </cofactor>
</comment>
<comment type="subcellular location">
    <subcellularLocation>
        <location evidence="1">Cytoplasm</location>
    </subcellularLocation>
</comment>
<comment type="similarity">
    <text evidence="1">In the N-terminal section; belongs to the methyltransferase superfamily. tRNA (mnm(5)s(2)U34)-methyltransferase family.</text>
</comment>
<comment type="similarity">
    <text evidence="1">In the C-terminal section; belongs to the DAO family.</text>
</comment>
<keyword id="KW-0963">Cytoplasm</keyword>
<keyword id="KW-0274">FAD</keyword>
<keyword id="KW-0285">Flavoprotein</keyword>
<keyword id="KW-0489">Methyltransferase</keyword>
<keyword id="KW-0511">Multifunctional enzyme</keyword>
<keyword id="KW-0560">Oxidoreductase</keyword>
<keyword id="KW-0949">S-adenosyl-L-methionine</keyword>
<keyword id="KW-0808">Transferase</keyword>
<keyword id="KW-0819">tRNA processing</keyword>
<reference key="1">
    <citation type="submission" date="2007-06" db="EMBL/GenBank/DDBJ databases">
        <authorList>
            <person name="Dodson R.J."/>
            <person name="Harkins D."/>
            <person name="Paulsen I.T."/>
        </authorList>
    </citation>
    <scope>NUCLEOTIDE SEQUENCE [LARGE SCALE GENOMIC DNA]</scope>
    <source>
        <strain>DSM 24068 / PA7</strain>
    </source>
</reference>
<gene>
    <name evidence="1" type="primary">mnmC</name>
    <name type="ordered locus">PSPA7_1671</name>
</gene>
<name>MNMC_PSEP7</name>
<feature type="chain" id="PRO_1000065002" description="tRNA 5-methylaminomethyl-2-thiouridine biosynthesis bifunctional protein MnmC">
    <location>
        <begin position="1"/>
        <end position="654"/>
    </location>
</feature>
<feature type="region of interest" description="tRNA (mnm(5)s(2)U34)-methyltransferase">
    <location>
        <begin position="1"/>
        <end position="235"/>
    </location>
</feature>
<feature type="region of interest" description="FAD-dependent cmnm(5)s(2)U34 oxidoreductase">
    <location>
        <begin position="261"/>
        <end position="654"/>
    </location>
</feature>
<organism>
    <name type="scientific">Pseudomonas paraeruginosa (strain DSM 24068 / PA7)</name>
    <name type="common">Pseudomonas aeruginosa (strain PA7)</name>
    <dbReference type="NCBI Taxonomy" id="381754"/>
    <lineage>
        <taxon>Bacteria</taxon>
        <taxon>Pseudomonadati</taxon>
        <taxon>Pseudomonadota</taxon>
        <taxon>Gammaproteobacteria</taxon>
        <taxon>Pseudomonadales</taxon>
        <taxon>Pseudomonadaceae</taxon>
        <taxon>Pseudomonas</taxon>
        <taxon>Pseudomonas paraeruginosa</taxon>
    </lineage>
</organism>
<sequence>MSDFQHAQLDWDENGQPLSRVFGDVYFSRHSGLDETRHVFLATNRLAERFAALGDGEALCIGETGFGTGLNFLCAWQLFERVAPPGARLEFVSVEKFPLAAADLRRALALWPELAPWSEPLLGQYLALHPGFQRLAFAGGRVGLTLLLGDALECLPQLDARIDAWFLDGFAPAKNPDMWSPALFAELARLSAPQATLGTFTSAGFVRRGLIEAGFAMQRVPGYGQKREMLGGTYQGPPASAGKPWYARPAPHAGRRAALVVGGGLAGCASAASLAARGWQVTLIERHPGLAREASGNPQGVLYLKLSAHGTPLSRLVLSGFGHTRRLLERLRRGHDWDACGVLQLAFDAKEAQRQAQLAAAFPADLLHGLDREQAERLAGVALPAGGLFYPEAGWVHPPALCQALATTPGITLLSGRAVRLRREGDDWCAYAGDECLARAPLAILATAADIRDFPPAAELPLKRIRGQVTRLPATAQSRALRTVVCAEGYVAPPRGDEHTLGASFDFKSEDLAPTLAEHQGNLELLREISPDLLQRLGADDLPLERLEGRAAFRCTSPDYLPLVGPLAERAAFDEAYAVLARDARQVPERACPWLPGLYLNSGHGSRGLISAPLSGELLAAWICGEPLPLPRAVGEACHPNRFLLRDLVRGQRG</sequence>